<proteinExistence type="inferred from homology"/>
<organism>
    <name type="scientific">Human cytomegalovirus (strain Merlin)</name>
    <name type="common">HHV-5</name>
    <name type="synonym">Human herpesvirus 5</name>
    <dbReference type="NCBI Taxonomy" id="295027"/>
    <lineage>
        <taxon>Viruses</taxon>
        <taxon>Duplodnaviria</taxon>
        <taxon>Heunggongvirae</taxon>
        <taxon>Peploviricota</taxon>
        <taxon>Herviviricetes</taxon>
        <taxon>Herpesvirales</taxon>
        <taxon>Orthoherpesviridae</taxon>
        <taxon>Betaherpesvirinae</taxon>
        <taxon>Cytomegalovirus</taxon>
        <taxon>Cytomegalovirus humanbeta5</taxon>
        <taxon>Human cytomegalovirus</taxon>
    </lineage>
</organism>
<gene>
    <name type="primary">UL144</name>
    <name type="ORF">HHV5wtgp119</name>
</gene>
<reference key="1">
    <citation type="journal article" date="2004" name="J. Gen. Virol.">
        <title>Genetic content of wild-type human cytomegalovirus.</title>
        <authorList>
            <person name="Dolan A."/>
            <person name="Cunningham C."/>
            <person name="Hector R.D."/>
            <person name="Hassan-Walker A.F."/>
            <person name="Lee L."/>
            <person name="Addison C."/>
            <person name="Dargan D.J."/>
            <person name="McGeoch D.J."/>
            <person name="Gatherer D."/>
            <person name="Emery V.C."/>
            <person name="Griffiths P.D."/>
            <person name="Sinzger C."/>
            <person name="McSharry B.P."/>
            <person name="Wilkinson G.W.G."/>
            <person name="Davison A.J."/>
        </authorList>
    </citation>
    <scope>NUCLEOTIDE SEQUENCE [LARGE SCALE GENOMIC DNA]</scope>
</reference>
<comment type="function">
    <text evidence="1">Activates NF-kappa-B in a tumor necrosis factor receptor (TNFR)-associated factor 6 (TRAF6)-dependent manner, causing the up-regulation of the chemokine CCL22.</text>
</comment>
<comment type="subunit">
    <text evidence="1">Interacts with host TRIM23; this interaction causes auto-ubiquitination of TRAF6, leading to NF-kappaB activation.</text>
</comment>
<comment type="subcellular location">
    <subcellularLocation>
        <location evidence="4">Membrane</location>
        <topology evidence="4">Single-pass membrane protein</topology>
    </subcellularLocation>
</comment>
<organismHost>
    <name type="scientific">Homo sapiens</name>
    <name type="common">Human</name>
    <dbReference type="NCBI Taxonomy" id="9606"/>
</organismHost>
<dbReference type="EMBL" id="AY446894">
    <property type="protein sequence ID" value="AAR31677.1"/>
    <property type="molecule type" value="Genomic_DNA"/>
</dbReference>
<dbReference type="RefSeq" id="YP_081573.1">
    <property type="nucleotide sequence ID" value="NC_006273.2"/>
</dbReference>
<dbReference type="SMR" id="F5HAM0"/>
<dbReference type="BioGRID" id="1678024">
    <property type="interactions" value="2"/>
</dbReference>
<dbReference type="DNASU" id="3077471"/>
<dbReference type="GeneID" id="3077471"/>
<dbReference type="KEGG" id="vg:3077471"/>
<dbReference type="Reactome" id="R-HSA-9610379">
    <property type="pathway name" value="HCMV Late Events"/>
</dbReference>
<dbReference type="Proteomes" id="UP000000938">
    <property type="component" value="Segment"/>
</dbReference>
<dbReference type="GO" id="GO:0016020">
    <property type="term" value="C:membrane"/>
    <property type="evidence" value="ECO:0007669"/>
    <property type="project" value="UniProtKB-SubCell"/>
</dbReference>
<dbReference type="GO" id="GO:0050829">
    <property type="term" value="P:defense response to Gram-negative bacterium"/>
    <property type="evidence" value="ECO:0007669"/>
    <property type="project" value="TreeGrafter"/>
</dbReference>
<dbReference type="GO" id="GO:0050830">
    <property type="term" value="P:defense response to Gram-positive bacterium"/>
    <property type="evidence" value="ECO:0007669"/>
    <property type="project" value="TreeGrafter"/>
</dbReference>
<dbReference type="GO" id="GO:0046642">
    <property type="term" value="P:negative regulation of alpha-beta T cell proliferation"/>
    <property type="evidence" value="ECO:0007669"/>
    <property type="project" value="TreeGrafter"/>
</dbReference>
<dbReference type="GO" id="GO:0002720">
    <property type="term" value="P:positive regulation of cytokine production involved in immune response"/>
    <property type="evidence" value="ECO:0007669"/>
    <property type="project" value="TreeGrafter"/>
</dbReference>
<dbReference type="GO" id="GO:2000406">
    <property type="term" value="P:positive regulation of T cell migration"/>
    <property type="evidence" value="ECO:0007669"/>
    <property type="project" value="TreeGrafter"/>
</dbReference>
<dbReference type="GO" id="GO:0085033">
    <property type="term" value="P:symbiont-mediated activation of host NF-kappaB cascade"/>
    <property type="evidence" value="ECO:0007669"/>
    <property type="project" value="UniProtKB-KW"/>
</dbReference>
<dbReference type="Gene3D" id="2.10.50.10">
    <property type="entry name" value="Tumor Necrosis Factor Receptor, subunit A, domain 2"/>
    <property type="match status" value="2"/>
</dbReference>
<dbReference type="InterPro" id="IPR001368">
    <property type="entry name" value="TNFR/NGFR_Cys_rich_reg"/>
</dbReference>
<dbReference type="PANTHER" id="PTHR46838">
    <property type="entry name" value="TUMOR NECROSIS FACTOR RECEPTOR SUPERFAMILY MEMBER 14"/>
    <property type="match status" value="1"/>
</dbReference>
<dbReference type="PANTHER" id="PTHR46838:SF1">
    <property type="entry name" value="TUMOR NECROSIS FACTOR RECEPTOR SUPERFAMILY MEMBER 14"/>
    <property type="match status" value="1"/>
</dbReference>
<dbReference type="Pfam" id="PF00020">
    <property type="entry name" value="TNFR_c6"/>
    <property type="match status" value="1"/>
</dbReference>
<dbReference type="SMART" id="SM00208">
    <property type="entry name" value="TNFR"/>
    <property type="match status" value="2"/>
</dbReference>
<dbReference type="SUPFAM" id="SSF57586">
    <property type="entry name" value="TNF receptor-like"/>
    <property type="match status" value="2"/>
</dbReference>
<dbReference type="PROSITE" id="PS00652">
    <property type="entry name" value="TNFR_NGFR_1"/>
    <property type="match status" value="1"/>
</dbReference>
<dbReference type="PROSITE" id="PS50050">
    <property type="entry name" value="TNFR_NGFR_2"/>
    <property type="match status" value="1"/>
</dbReference>
<protein>
    <recommendedName>
        <fullName>Membrane glycoprotein UL144</fullName>
    </recommendedName>
    <alternativeName>
        <fullName>TNF alpha-like receptor UL144</fullName>
    </alternativeName>
    <alternativeName>
        <fullName>UL144 protein</fullName>
    </alternativeName>
</protein>
<feature type="signal peptide" evidence="2">
    <location>
        <begin position="1"/>
        <end position="20"/>
    </location>
</feature>
<feature type="chain" id="PRO_0000414120" description="Membrane glycoprotein UL144">
    <location>
        <begin position="21"/>
        <end position="176"/>
    </location>
</feature>
<feature type="transmembrane region" description="Helical" evidence="2">
    <location>
        <begin position="134"/>
        <end position="154"/>
    </location>
</feature>
<feature type="repeat" description="TNFR-Cys">
    <location>
        <begin position="58"/>
        <end position="95"/>
    </location>
</feature>
<feature type="disulfide bond" evidence="3">
    <location>
        <begin position="59"/>
        <end position="71"/>
    </location>
</feature>
<feature type="disulfide bond" evidence="3">
    <location>
        <begin position="74"/>
        <end position="87"/>
    </location>
</feature>
<feature type="disulfide bond" evidence="3">
    <location>
        <begin position="77"/>
        <end position="95"/>
    </location>
</feature>
<keyword id="KW-1074">Activation of host NF-kappa-B by virus</keyword>
<keyword id="KW-1015">Disulfide bond</keyword>
<keyword id="KW-0945">Host-virus interaction</keyword>
<keyword id="KW-0472">Membrane</keyword>
<keyword id="KW-1185">Reference proteome</keyword>
<keyword id="KW-0677">Repeat</keyword>
<keyword id="KW-0732">Signal</keyword>
<keyword id="KW-0812">Transmembrane</keyword>
<keyword id="KW-1133">Transmembrane helix</keyword>
<evidence type="ECO:0000250" key="1"/>
<evidence type="ECO:0000255" key="2"/>
<evidence type="ECO:0000255" key="3">
    <source>
        <dbReference type="PROSITE-ProRule" id="PRU00206"/>
    </source>
</evidence>
<evidence type="ECO:0000305" key="4"/>
<name>UL144_HCMVM</name>
<sequence length="176" mass="19629">MKPLVMLICFGVILLQLGVTKVCQHNEVQLGNECCPPCGLGQRVTKVCTERTSVTCTPCPNGTYVSGLYNCTDCTQCNVTQVMIRNCTSTNNTVCAPKNHTYFSTPGVQHHKQRQQNHTAHITVKQGKSGRHTLAWLSLFIFLVGIILLILYLIAAYRSERCQQCCSIGKIFYRTL</sequence>
<accession>F5HAM0</accession>